<sequence length="504" mass="56536">MKLLEQIEKWAIETPDQTAFVWRDAKITYKQLKEDSDALAHWISSEYPDDRSPIMVYGHMQPEMIINFLGCVKAGHAYIPVDLSIPADRVQRIAENSGAKLLLSAATVTVTDLPVRIVSEDNLKDIFFTHKGNTPNPEHAVKGDENFYIIYTSGSTGNPKGVQITYNCLVSFTQWAVEDFNLQTGQVFLNQAPFSFDLSVMDIYPSLVTGGTLWAIDKDMIARPKDLFASLEQSDIQVWTSTPSFAEMCLMEASFSESMLPNMKTFLFCGEVLPNEVARKLIERFPKATIMNTYGPTEATVAVTGIHVTEEVLDQYKSLPVGYCKSDCRLLIMKEDGTIAPDGEKGEIVIVGPSVSVGYLGSPELTEKAFTMIDGERAYKTGDAGYVENGLLFYNGRLDFQIKLHGYRMELEEIEHHLRACSYVEGAVIVPIKKGEKYDYLLAVVVPGEHSFEKEFKLTSAIKKELNERLPNYMIPRKFMYQSSIPMTPNGKVDRKKLLSEVTA</sequence>
<proteinExistence type="inferred from homology"/>
<reference key="1">
    <citation type="journal article" date="2006" name="J. Bacteriol.">
        <title>Pathogenomic sequence analysis of Bacillus cereus and Bacillus thuringiensis isolates closely related to Bacillus anthracis.</title>
        <authorList>
            <person name="Han C.S."/>
            <person name="Xie G."/>
            <person name="Challacombe J.F."/>
            <person name="Altherr M.R."/>
            <person name="Bhotika S.S."/>
            <person name="Bruce D."/>
            <person name="Campbell C.S."/>
            <person name="Campbell M.L."/>
            <person name="Chen J."/>
            <person name="Chertkov O."/>
            <person name="Cleland C."/>
            <person name="Dimitrijevic M."/>
            <person name="Doggett N.A."/>
            <person name="Fawcett J.J."/>
            <person name="Glavina T."/>
            <person name="Goodwin L.A."/>
            <person name="Hill K.K."/>
            <person name="Hitchcock P."/>
            <person name="Jackson P.J."/>
            <person name="Keim P."/>
            <person name="Kewalramani A.R."/>
            <person name="Longmire J."/>
            <person name="Lucas S."/>
            <person name="Malfatti S."/>
            <person name="McMurry K."/>
            <person name="Meincke L.J."/>
            <person name="Misra M."/>
            <person name="Moseman B.L."/>
            <person name="Mundt M."/>
            <person name="Munk A.C."/>
            <person name="Okinaka R.T."/>
            <person name="Parson-Quintana B."/>
            <person name="Reilly L.P."/>
            <person name="Richardson P."/>
            <person name="Robinson D.L."/>
            <person name="Rubin E."/>
            <person name="Saunders E."/>
            <person name="Tapia R."/>
            <person name="Tesmer J.G."/>
            <person name="Thayer N."/>
            <person name="Thompson L.S."/>
            <person name="Tice H."/>
            <person name="Ticknor L.O."/>
            <person name="Wills P.L."/>
            <person name="Brettin T.S."/>
            <person name="Gilna P."/>
        </authorList>
    </citation>
    <scope>NUCLEOTIDE SEQUENCE [LARGE SCALE GENOMIC DNA]</scope>
    <source>
        <strain>ZK / E33L</strain>
    </source>
</reference>
<keyword id="KW-0067">ATP-binding</keyword>
<keyword id="KW-0963">Cytoplasm</keyword>
<keyword id="KW-0436">Ligase</keyword>
<keyword id="KW-0547">Nucleotide-binding</keyword>
<evidence type="ECO:0000255" key="1">
    <source>
        <dbReference type="HAMAP-Rule" id="MF_00593"/>
    </source>
</evidence>
<feature type="chain" id="PRO_1000025527" description="D-alanine--D-alanyl carrier protein ligase">
    <location>
        <begin position="1"/>
        <end position="504"/>
    </location>
</feature>
<feature type="binding site" evidence="1">
    <location>
        <begin position="152"/>
        <end position="153"/>
    </location>
    <ligand>
        <name>ATP</name>
        <dbReference type="ChEBI" id="CHEBI:30616"/>
    </ligand>
</feature>
<feature type="binding site" evidence="1">
    <location>
        <position position="197"/>
    </location>
    <ligand>
        <name>D-alanine</name>
        <dbReference type="ChEBI" id="CHEBI:57416"/>
    </ligand>
</feature>
<feature type="binding site" evidence="1">
    <location>
        <begin position="292"/>
        <end position="297"/>
    </location>
    <ligand>
        <name>ATP</name>
        <dbReference type="ChEBI" id="CHEBI:30616"/>
    </ligand>
</feature>
<feature type="binding site" evidence="1">
    <location>
        <position position="301"/>
    </location>
    <ligand>
        <name>D-alanine</name>
        <dbReference type="ChEBI" id="CHEBI:57416"/>
    </ligand>
</feature>
<feature type="binding site" evidence="1">
    <location>
        <position position="383"/>
    </location>
    <ligand>
        <name>ATP</name>
        <dbReference type="ChEBI" id="CHEBI:30616"/>
    </ligand>
</feature>
<feature type="binding site" evidence="1">
    <location>
        <begin position="394"/>
        <end position="397"/>
    </location>
    <ligand>
        <name>ATP</name>
        <dbReference type="ChEBI" id="CHEBI:30616"/>
    </ligand>
</feature>
<feature type="binding site" evidence="1">
    <location>
        <position position="492"/>
    </location>
    <ligand>
        <name>ATP</name>
        <dbReference type="ChEBI" id="CHEBI:30616"/>
    </ligand>
</feature>
<feature type="binding site" evidence="1">
    <location>
        <position position="492"/>
    </location>
    <ligand>
        <name>D-alanine</name>
        <dbReference type="ChEBI" id="CHEBI:57416"/>
    </ligand>
</feature>
<name>DLTA_BACCZ</name>
<dbReference type="EC" id="6.2.1.54" evidence="1"/>
<dbReference type="EMBL" id="CP000001">
    <property type="protein sequence ID" value="AAU18987.1"/>
    <property type="molecule type" value="Genomic_DNA"/>
</dbReference>
<dbReference type="RefSeq" id="WP_000770520.1">
    <property type="nucleotide sequence ID" value="NC_006274.1"/>
</dbReference>
<dbReference type="SMR" id="Q63E02"/>
<dbReference type="KEGG" id="bcz:BCE33L1261"/>
<dbReference type="PATRIC" id="fig|288681.22.peg.4298"/>
<dbReference type="UniPathway" id="UPA00556"/>
<dbReference type="Proteomes" id="UP000002612">
    <property type="component" value="Chromosome"/>
</dbReference>
<dbReference type="GO" id="GO:0005737">
    <property type="term" value="C:cytoplasm"/>
    <property type="evidence" value="ECO:0007669"/>
    <property type="project" value="UniProtKB-SubCell"/>
</dbReference>
<dbReference type="GO" id="GO:0005524">
    <property type="term" value="F:ATP binding"/>
    <property type="evidence" value="ECO:0007669"/>
    <property type="project" value="UniProtKB-KW"/>
</dbReference>
<dbReference type="GO" id="GO:0047473">
    <property type="term" value="F:D-alanine [D-alanyl carrier protein] ligase activity"/>
    <property type="evidence" value="ECO:0007669"/>
    <property type="project" value="UniProtKB-UniRule"/>
</dbReference>
<dbReference type="GO" id="GO:0070395">
    <property type="term" value="P:lipoteichoic acid biosynthetic process"/>
    <property type="evidence" value="ECO:0007669"/>
    <property type="project" value="UniProtKB-UniRule"/>
</dbReference>
<dbReference type="CDD" id="cd05945">
    <property type="entry name" value="DltA"/>
    <property type="match status" value="1"/>
</dbReference>
<dbReference type="FunFam" id="3.30.300.30:FF:000012">
    <property type="entry name" value="D-alanine--D-alanyl carrier protein ligase"/>
    <property type="match status" value="1"/>
</dbReference>
<dbReference type="FunFam" id="3.40.50.12780:FF:000015">
    <property type="entry name" value="D-alanine--D-alanyl carrier protein ligase"/>
    <property type="match status" value="1"/>
</dbReference>
<dbReference type="Gene3D" id="3.30.300.30">
    <property type="match status" value="1"/>
</dbReference>
<dbReference type="Gene3D" id="3.40.50.12780">
    <property type="entry name" value="N-terminal domain of ligase-like"/>
    <property type="match status" value="1"/>
</dbReference>
<dbReference type="HAMAP" id="MF_00593">
    <property type="entry name" value="DltA"/>
    <property type="match status" value="1"/>
</dbReference>
<dbReference type="InterPro" id="IPR010071">
    <property type="entry name" value="AA_adenyl_dom"/>
</dbReference>
<dbReference type="InterPro" id="IPR025110">
    <property type="entry name" value="AMP-bd_C"/>
</dbReference>
<dbReference type="InterPro" id="IPR045851">
    <property type="entry name" value="AMP-bd_C_sf"/>
</dbReference>
<dbReference type="InterPro" id="IPR020845">
    <property type="entry name" value="AMP-binding_CS"/>
</dbReference>
<dbReference type="InterPro" id="IPR000873">
    <property type="entry name" value="AMP-dep_synth/lig_dom"/>
</dbReference>
<dbReference type="InterPro" id="IPR042099">
    <property type="entry name" value="ANL_N_sf"/>
</dbReference>
<dbReference type="InterPro" id="IPR010072">
    <property type="entry name" value="DltA"/>
</dbReference>
<dbReference type="InterPro" id="IPR044507">
    <property type="entry name" value="DltA-like"/>
</dbReference>
<dbReference type="NCBIfam" id="TIGR01733">
    <property type="entry name" value="AA-adenyl-dom"/>
    <property type="match status" value="1"/>
</dbReference>
<dbReference type="NCBIfam" id="TIGR01734">
    <property type="entry name" value="D-ala-DACP-lig"/>
    <property type="match status" value="1"/>
</dbReference>
<dbReference type="NCBIfam" id="NF003417">
    <property type="entry name" value="PRK04813.1"/>
    <property type="match status" value="1"/>
</dbReference>
<dbReference type="PANTHER" id="PTHR45398">
    <property type="match status" value="1"/>
</dbReference>
<dbReference type="PANTHER" id="PTHR45398:SF1">
    <property type="entry name" value="ENZYME, PUTATIVE (JCVI)-RELATED"/>
    <property type="match status" value="1"/>
</dbReference>
<dbReference type="Pfam" id="PF00501">
    <property type="entry name" value="AMP-binding"/>
    <property type="match status" value="1"/>
</dbReference>
<dbReference type="Pfam" id="PF13193">
    <property type="entry name" value="AMP-binding_C"/>
    <property type="match status" value="1"/>
</dbReference>
<dbReference type="SUPFAM" id="SSF56801">
    <property type="entry name" value="Acetyl-CoA synthetase-like"/>
    <property type="match status" value="1"/>
</dbReference>
<dbReference type="PROSITE" id="PS00455">
    <property type="entry name" value="AMP_BINDING"/>
    <property type="match status" value="1"/>
</dbReference>
<gene>
    <name evidence="1" type="primary">dltA</name>
    <name type="ordered locus">BCE33L1261</name>
</gene>
<organism>
    <name type="scientific">Bacillus cereus (strain ZK / E33L)</name>
    <dbReference type="NCBI Taxonomy" id="288681"/>
    <lineage>
        <taxon>Bacteria</taxon>
        <taxon>Bacillati</taxon>
        <taxon>Bacillota</taxon>
        <taxon>Bacilli</taxon>
        <taxon>Bacillales</taxon>
        <taxon>Bacillaceae</taxon>
        <taxon>Bacillus</taxon>
        <taxon>Bacillus cereus group</taxon>
    </lineage>
</organism>
<comment type="function">
    <text evidence="1">Catalyzes the first step in the D-alanylation of lipoteichoic acid (LTA), the activation of D-alanine and its transfer onto the D-alanyl carrier protein (Dcp) DltC. In an ATP-dependent two-step reaction, forms a high energy D-alanyl-AMP intermediate, followed by transfer of the D-alanyl residue as a thiol ester to the phosphopantheinyl prosthetic group of the Dcp. D-alanylation of LTA plays an important role in modulating the properties of the cell wall in Gram-positive bacteria, influencing the net charge of the cell wall.</text>
</comment>
<comment type="catalytic activity">
    <reaction evidence="1">
        <text>holo-[D-alanyl-carrier protein] + D-alanine + ATP = D-alanyl-[D-alanyl-carrier protein] + AMP + diphosphate</text>
        <dbReference type="Rhea" id="RHEA:55132"/>
        <dbReference type="Rhea" id="RHEA-COMP:14102"/>
        <dbReference type="Rhea" id="RHEA-COMP:14103"/>
        <dbReference type="ChEBI" id="CHEBI:30616"/>
        <dbReference type="ChEBI" id="CHEBI:33019"/>
        <dbReference type="ChEBI" id="CHEBI:57416"/>
        <dbReference type="ChEBI" id="CHEBI:64479"/>
        <dbReference type="ChEBI" id="CHEBI:138620"/>
        <dbReference type="ChEBI" id="CHEBI:456215"/>
        <dbReference type="EC" id="6.2.1.54"/>
    </reaction>
</comment>
<comment type="pathway">
    <text evidence="1">Cell wall biogenesis; lipoteichoic acid biosynthesis.</text>
</comment>
<comment type="subcellular location">
    <subcellularLocation>
        <location evidence="1">Cytoplasm</location>
    </subcellularLocation>
</comment>
<comment type="similarity">
    <text evidence="1">Belongs to the ATP-dependent AMP-binding enzyme family. DltA subfamily.</text>
</comment>
<accession>Q63E02</accession>
<protein>
    <recommendedName>
        <fullName evidence="1">D-alanine--D-alanyl carrier protein ligase</fullName>
        <shortName evidence="1">DCL</shortName>
        <ecNumber evidence="1">6.2.1.54</ecNumber>
    </recommendedName>
    <alternativeName>
        <fullName evidence="1">D-alanine--poly(phosphoribitol) ligase subunit 1</fullName>
    </alternativeName>
    <alternativeName>
        <fullName evidence="1">D-alanine-activating enzyme</fullName>
        <shortName evidence="1">DAE</shortName>
    </alternativeName>
</protein>